<proteinExistence type="evidence at transcript level"/>
<dbReference type="EMBL" id="BC119926">
    <property type="protein sequence ID" value="AAI19927.1"/>
    <property type="molecule type" value="mRNA"/>
</dbReference>
<dbReference type="RefSeq" id="NP_001069764.1">
    <property type="nucleotide sequence ID" value="NM_001076296.1"/>
</dbReference>
<dbReference type="SMR" id="Q0VCZ0"/>
<dbReference type="FunCoup" id="Q0VCZ0">
    <property type="interactions" value="907"/>
</dbReference>
<dbReference type="STRING" id="9913.ENSBTAP00000000737"/>
<dbReference type="PaxDb" id="9913-ENSBTAP00000000737"/>
<dbReference type="Ensembl" id="ENSBTAT00000000737.6">
    <property type="protein sequence ID" value="ENSBTAP00000000737.4"/>
    <property type="gene ID" value="ENSBTAG00000000564.7"/>
</dbReference>
<dbReference type="GeneID" id="613901"/>
<dbReference type="KEGG" id="bta:613901"/>
<dbReference type="CTD" id="51617"/>
<dbReference type="VEuPathDB" id="HostDB:ENSBTAG00000000564"/>
<dbReference type="VGNC" id="VGNC:58607">
    <property type="gene designation" value="NSG2"/>
</dbReference>
<dbReference type="eggNOG" id="ENOG502QRFC">
    <property type="taxonomic scope" value="Eukaryota"/>
</dbReference>
<dbReference type="GeneTree" id="ENSGT00390000000483"/>
<dbReference type="HOGENOM" id="CLU_112085_1_0_1"/>
<dbReference type="InParanoid" id="Q0VCZ0"/>
<dbReference type="OMA" id="LWREDSW"/>
<dbReference type="OrthoDB" id="8924576at2759"/>
<dbReference type="TreeFam" id="TF332232"/>
<dbReference type="Proteomes" id="UP000009136">
    <property type="component" value="Chromosome 20"/>
</dbReference>
<dbReference type="Bgee" id="ENSBTAG00000000564">
    <property type="expression patterns" value="Expressed in floor plate of diencephalon and 53 other cell types or tissues"/>
</dbReference>
<dbReference type="GO" id="GO:0030659">
    <property type="term" value="C:cytoplasmic vesicle membrane"/>
    <property type="evidence" value="ECO:0000250"/>
    <property type="project" value="UniProtKB"/>
</dbReference>
<dbReference type="GO" id="GO:0030425">
    <property type="term" value="C:dendrite"/>
    <property type="evidence" value="ECO:0000250"/>
    <property type="project" value="UniProtKB"/>
</dbReference>
<dbReference type="GO" id="GO:0005769">
    <property type="term" value="C:early endosome"/>
    <property type="evidence" value="ECO:0000250"/>
    <property type="project" value="UniProtKB"/>
</dbReference>
<dbReference type="GO" id="GO:0031901">
    <property type="term" value="C:early endosome membrane"/>
    <property type="evidence" value="ECO:0007669"/>
    <property type="project" value="UniProtKB-SubCell"/>
</dbReference>
<dbReference type="GO" id="GO:0005768">
    <property type="term" value="C:endosome"/>
    <property type="evidence" value="ECO:0000250"/>
    <property type="project" value="UniProtKB"/>
</dbReference>
<dbReference type="GO" id="GO:1990674">
    <property type="term" value="C:Golgi cis cisterna membrane"/>
    <property type="evidence" value="ECO:0000250"/>
    <property type="project" value="UniProtKB"/>
</dbReference>
<dbReference type="GO" id="GO:0005770">
    <property type="term" value="C:late endosome"/>
    <property type="evidence" value="ECO:0000250"/>
    <property type="project" value="UniProtKB"/>
</dbReference>
<dbReference type="GO" id="GO:0043202">
    <property type="term" value="C:lysosomal lumen"/>
    <property type="evidence" value="ECO:0007669"/>
    <property type="project" value="UniProtKB-SubCell"/>
</dbReference>
<dbReference type="GO" id="GO:0016020">
    <property type="term" value="C:membrane"/>
    <property type="evidence" value="ECO:0000318"/>
    <property type="project" value="GO_Central"/>
</dbReference>
<dbReference type="GO" id="GO:0032585">
    <property type="term" value="C:multivesicular body membrane"/>
    <property type="evidence" value="ECO:0000250"/>
    <property type="project" value="UniProtKB"/>
</dbReference>
<dbReference type="GO" id="GO:0032588">
    <property type="term" value="C:trans-Golgi network membrane"/>
    <property type="evidence" value="ECO:0000250"/>
    <property type="project" value="UniProtKB"/>
</dbReference>
<dbReference type="GO" id="GO:0032051">
    <property type="term" value="F:clathrin light chain binding"/>
    <property type="evidence" value="ECO:0000318"/>
    <property type="project" value="GO_Central"/>
</dbReference>
<dbReference type="GO" id="GO:0048268">
    <property type="term" value="P:clathrin coat assembly"/>
    <property type="evidence" value="ECO:0000318"/>
    <property type="project" value="GO_Central"/>
</dbReference>
<dbReference type="GO" id="GO:0016197">
    <property type="term" value="P:endosomal transport"/>
    <property type="evidence" value="ECO:0000318"/>
    <property type="project" value="GO_Central"/>
</dbReference>
<dbReference type="InterPro" id="IPR009431">
    <property type="entry name" value="NSG"/>
</dbReference>
<dbReference type="PANTHER" id="PTHR28546:SF2">
    <property type="entry name" value="NEURONAL VESICLE TRAFFICKING-ASSOCIATED PROTEIN 2"/>
    <property type="match status" value="1"/>
</dbReference>
<dbReference type="PANTHER" id="PTHR28546">
    <property type="entry name" value="NEURONAL VESICLE TRAFFICKING-ASSOCIATED PROTEIN 2-RELATED"/>
    <property type="match status" value="1"/>
</dbReference>
<dbReference type="Pfam" id="PF06387">
    <property type="entry name" value="Calcyon"/>
    <property type="match status" value="1"/>
</dbReference>
<dbReference type="PIRSF" id="PIRSF002383">
    <property type="entry name" value="Calcyon"/>
    <property type="match status" value="1"/>
</dbReference>
<name>NSG2_BOVIN</name>
<evidence type="ECO:0000250" key="1">
    <source>
        <dbReference type="UniProtKB" id="P47759"/>
    </source>
</evidence>
<evidence type="ECO:0000250" key="2">
    <source>
        <dbReference type="UniProtKB" id="Q3KR51"/>
    </source>
</evidence>
<evidence type="ECO:0000250" key="3">
    <source>
        <dbReference type="UniProtKB" id="Q9Y328"/>
    </source>
</evidence>
<evidence type="ECO:0000255" key="4"/>
<evidence type="ECO:0000256" key="5">
    <source>
        <dbReference type="SAM" id="MobiDB-lite"/>
    </source>
</evidence>
<evidence type="ECO:0000305" key="6"/>
<keyword id="KW-0966">Cell projection</keyword>
<keyword id="KW-0968">Cytoplasmic vesicle</keyword>
<keyword id="KW-0967">Endosome</keyword>
<keyword id="KW-0333">Golgi apparatus</keyword>
<keyword id="KW-0458">Lysosome</keyword>
<keyword id="KW-0472">Membrane</keyword>
<keyword id="KW-1185">Reference proteome</keyword>
<keyword id="KW-0735">Signal-anchor</keyword>
<keyword id="KW-0812">Transmembrane</keyword>
<keyword id="KW-1133">Transmembrane helix</keyword>
<organism>
    <name type="scientific">Bos taurus</name>
    <name type="common">Bovine</name>
    <dbReference type="NCBI Taxonomy" id="9913"/>
    <lineage>
        <taxon>Eukaryota</taxon>
        <taxon>Metazoa</taxon>
        <taxon>Chordata</taxon>
        <taxon>Craniata</taxon>
        <taxon>Vertebrata</taxon>
        <taxon>Euteleostomi</taxon>
        <taxon>Mammalia</taxon>
        <taxon>Eutheria</taxon>
        <taxon>Laurasiatheria</taxon>
        <taxon>Artiodactyla</taxon>
        <taxon>Ruminantia</taxon>
        <taxon>Pecora</taxon>
        <taxon>Bovidae</taxon>
        <taxon>Bovinae</taxon>
        <taxon>Bos</taxon>
    </lineage>
</organism>
<feature type="chain" id="PRO_0000253603" description="Neuronal vesicle trafficking-associated protein 2">
    <location>
        <begin position="1"/>
        <end position="171"/>
    </location>
</feature>
<feature type="topological domain" description="Cytoplasmic" evidence="4">
    <location>
        <begin position="1"/>
        <end position="71"/>
    </location>
</feature>
<feature type="transmembrane region" description="Helical; Signal-anchor for type II membrane protein" evidence="4">
    <location>
        <begin position="72"/>
        <end position="92"/>
    </location>
</feature>
<feature type="topological domain" description="Lumenal" evidence="4">
    <location>
        <begin position="93"/>
        <end position="171"/>
    </location>
</feature>
<feature type="region of interest" description="Disordered" evidence="5">
    <location>
        <begin position="1"/>
        <end position="21"/>
    </location>
</feature>
<gene>
    <name evidence="3" type="primary">NSG2</name>
</gene>
<comment type="subcellular location">
    <subcellularLocation>
        <location evidence="2">Membrane</location>
        <topology evidence="2">Single-pass type II membrane protein</topology>
    </subcellularLocation>
    <subcellularLocation>
        <location evidence="2">Golgi apparatus</location>
        <location evidence="2">trans-Golgi network membrane</location>
    </subcellularLocation>
    <subcellularLocation>
        <location evidence="2">Cell projection</location>
        <location evidence="2">Dendrite</location>
    </subcellularLocation>
    <subcellularLocation>
        <location evidence="2">Endosome membrane</location>
    </subcellularLocation>
    <subcellularLocation>
        <location evidence="2">Early endosome membrane</location>
    </subcellularLocation>
    <subcellularLocation>
        <location evidence="2">Late endosome membrane</location>
    </subcellularLocation>
    <subcellularLocation>
        <location evidence="2">Lysosome lumen</location>
    </subcellularLocation>
    <subcellularLocation>
        <location evidence="1">Cytoplasmic vesicle membrane</location>
    </subcellularLocation>
    <subcellularLocation>
        <location evidence="1">Golgi apparatus</location>
        <location evidence="1">Golgi stack membrane</location>
    </subcellularLocation>
    <subcellularLocation>
        <location evidence="1">Endosome</location>
        <location evidence="1">Multivesicular body membrane</location>
    </subcellularLocation>
    <text evidence="1 2">Endocytosed from the cell surface, thus entered into early endosomes, trafficks to late endosomes and degradates in lysosomes (By similarity). Mainly Golgi stack, but also found in small vacuolar organelles and multivesicular bodies. Found in both stationary and motile endosomes (By similarity).</text>
</comment>
<comment type="similarity">
    <text evidence="6">Belongs to the NSG family.</text>
</comment>
<protein>
    <recommendedName>
        <fullName evidence="3">Neuronal vesicle trafficking-associated protein 2</fullName>
    </recommendedName>
    <alternativeName>
        <fullName evidence="3">Neuron-specific protein family member 2</fullName>
    </alternativeName>
</protein>
<accession>Q0VCZ0</accession>
<sequence>MVKLNSNPSEKGAKPPSVEDGFQTVPLITPLEVNHLQLPAPEKVIVKTRTEYQPEQKNKGKFRVPKIAEFTVTILVSLALAFLACIVFLVVYKAFTYDHSCPEGFVYKHKRCIPASLDAYYSSQDPSSRSRFYTVISHYSVAKQSTARAIGPWLSAAAVIHEPKPPKTQGH</sequence>
<reference key="1">
    <citation type="submission" date="2006-08" db="EMBL/GenBank/DDBJ databases">
        <authorList>
            <consortium name="NIH - Mammalian Gene Collection (MGC) project"/>
        </authorList>
    </citation>
    <scope>NUCLEOTIDE SEQUENCE [LARGE SCALE MRNA]</scope>
    <source>
        <strain>Hereford</strain>
        <tissue>Basal ganglia</tissue>
    </source>
</reference>